<keyword id="KW-0687">Ribonucleoprotein</keyword>
<keyword id="KW-0689">Ribosomal protein</keyword>
<reference key="1">
    <citation type="journal article" date="2008" name="BMC Genomics">
        <title>The missing link: Bordetella petrii is endowed with both the metabolic versatility of environmental bacteria and virulence traits of pathogenic Bordetellae.</title>
        <authorList>
            <person name="Gross R."/>
            <person name="Guzman C.A."/>
            <person name="Sebaihia M."/>
            <person name="Martin dos Santos V.A.P."/>
            <person name="Pieper D.H."/>
            <person name="Koebnik R."/>
            <person name="Lechner M."/>
            <person name="Bartels D."/>
            <person name="Buhrmester J."/>
            <person name="Choudhuri J.V."/>
            <person name="Ebensen T."/>
            <person name="Gaigalat L."/>
            <person name="Herrmann S."/>
            <person name="Khachane A.N."/>
            <person name="Larisch C."/>
            <person name="Link S."/>
            <person name="Linke B."/>
            <person name="Meyer F."/>
            <person name="Mormann S."/>
            <person name="Nakunst D."/>
            <person name="Rueckert C."/>
            <person name="Schneiker-Bekel S."/>
            <person name="Schulze K."/>
            <person name="Voerholter F.-J."/>
            <person name="Yevsa T."/>
            <person name="Engle J.T."/>
            <person name="Goldman W.E."/>
            <person name="Puehler A."/>
            <person name="Goebel U.B."/>
            <person name="Goesmann A."/>
            <person name="Bloecker H."/>
            <person name="Kaiser O."/>
            <person name="Martinez-Arias R."/>
        </authorList>
    </citation>
    <scope>NUCLEOTIDE SEQUENCE [LARGE SCALE GENOMIC DNA]</scope>
    <source>
        <strain>ATCC BAA-461 / DSM 12804 / CCUG 43448</strain>
    </source>
</reference>
<dbReference type="EMBL" id="AM902716">
    <property type="protein sequence ID" value="CAP45029.1"/>
    <property type="molecule type" value="Genomic_DNA"/>
</dbReference>
<dbReference type="SMR" id="A9IFF7"/>
<dbReference type="STRING" id="94624.Bpet4678"/>
<dbReference type="KEGG" id="bpt:Bpet4678"/>
<dbReference type="eggNOG" id="COG0211">
    <property type="taxonomic scope" value="Bacteria"/>
</dbReference>
<dbReference type="Proteomes" id="UP000001225">
    <property type="component" value="Chromosome"/>
</dbReference>
<dbReference type="GO" id="GO:0022625">
    <property type="term" value="C:cytosolic large ribosomal subunit"/>
    <property type="evidence" value="ECO:0007669"/>
    <property type="project" value="TreeGrafter"/>
</dbReference>
<dbReference type="GO" id="GO:0003735">
    <property type="term" value="F:structural constituent of ribosome"/>
    <property type="evidence" value="ECO:0007669"/>
    <property type="project" value="InterPro"/>
</dbReference>
<dbReference type="GO" id="GO:0006412">
    <property type="term" value="P:translation"/>
    <property type="evidence" value="ECO:0007669"/>
    <property type="project" value="UniProtKB-UniRule"/>
</dbReference>
<dbReference type="FunFam" id="2.40.50.100:FF:000001">
    <property type="entry name" value="50S ribosomal protein L27"/>
    <property type="match status" value="1"/>
</dbReference>
<dbReference type="Gene3D" id="2.40.50.100">
    <property type="match status" value="1"/>
</dbReference>
<dbReference type="HAMAP" id="MF_00539">
    <property type="entry name" value="Ribosomal_bL27"/>
    <property type="match status" value="1"/>
</dbReference>
<dbReference type="InterPro" id="IPR001684">
    <property type="entry name" value="Ribosomal_bL27"/>
</dbReference>
<dbReference type="InterPro" id="IPR018261">
    <property type="entry name" value="Ribosomal_bL27_CS"/>
</dbReference>
<dbReference type="NCBIfam" id="TIGR00062">
    <property type="entry name" value="L27"/>
    <property type="match status" value="1"/>
</dbReference>
<dbReference type="PANTHER" id="PTHR15893:SF0">
    <property type="entry name" value="LARGE RIBOSOMAL SUBUNIT PROTEIN BL27M"/>
    <property type="match status" value="1"/>
</dbReference>
<dbReference type="PANTHER" id="PTHR15893">
    <property type="entry name" value="RIBOSOMAL PROTEIN L27"/>
    <property type="match status" value="1"/>
</dbReference>
<dbReference type="Pfam" id="PF01016">
    <property type="entry name" value="Ribosomal_L27"/>
    <property type="match status" value="1"/>
</dbReference>
<dbReference type="PRINTS" id="PR00063">
    <property type="entry name" value="RIBOSOMALL27"/>
</dbReference>
<dbReference type="SUPFAM" id="SSF110324">
    <property type="entry name" value="Ribosomal L27 protein-like"/>
    <property type="match status" value="1"/>
</dbReference>
<dbReference type="PROSITE" id="PS00831">
    <property type="entry name" value="RIBOSOMAL_L27"/>
    <property type="match status" value="1"/>
</dbReference>
<organism>
    <name type="scientific">Bordetella petrii (strain ATCC BAA-461 / DSM 12804 / CCUG 43448)</name>
    <dbReference type="NCBI Taxonomy" id="340100"/>
    <lineage>
        <taxon>Bacteria</taxon>
        <taxon>Pseudomonadati</taxon>
        <taxon>Pseudomonadota</taxon>
        <taxon>Betaproteobacteria</taxon>
        <taxon>Burkholderiales</taxon>
        <taxon>Alcaligenaceae</taxon>
        <taxon>Bordetella</taxon>
    </lineage>
</organism>
<name>RL27_BORPD</name>
<evidence type="ECO:0000255" key="1">
    <source>
        <dbReference type="HAMAP-Rule" id="MF_00539"/>
    </source>
</evidence>
<evidence type="ECO:0000256" key="2">
    <source>
        <dbReference type="SAM" id="MobiDB-lite"/>
    </source>
</evidence>
<evidence type="ECO:0000305" key="3"/>
<feature type="chain" id="PRO_1000128701" description="Large ribosomal subunit protein bL27">
    <location>
        <begin position="1"/>
        <end position="86"/>
    </location>
</feature>
<feature type="region of interest" description="Disordered" evidence="2">
    <location>
        <begin position="1"/>
        <end position="21"/>
    </location>
</feature>
<feature type="compositionally biased region" description="Gly residues" evidence="2">
    <location>
        <begin position="1"/>
        <end position="10"/>
    </location>
</feature>
<proteinExistence type="inferred from homology"/>
<comment type="similarity">
    <text evidence="1">Belongs to the bacterial ribosomal protein bL27 family.</text>
</comment>
<gene>
    <name evidence="1" type="primary">rpmA</name>
    <name type="ordered locus">Bpet4678</name>
</gene>
<accession>A9IFF7</accession>
<protein>
    <recommendedName>
        <fullName evidence="1">Large ribosomal subunit protein bL27</fullName>
    </recommendedName>
    <alternativeName>
        <fullName evidence="3">50S ribosomal protein L27</fullName>
    </alternativeName>
</protein>
<sequence>MAQKKGGGSTRNGRDSESKRLGVKVFGGQQIPAGSIIVRQRGTRFHPGTNVGIGKDHTLFALIDGKVQFGFKGALNKQVVSVVAAE</sequence>